<dbReference type="EC" id="4.1.3.3" evidence="1"/>
<dbReference type="EMBL" id="AE004439">
    <property type="protein sequence ID" value="AAK03799.1"/>
    <property type="molecule type" value="Genomic_DNA"/>
</dbReference>
<dbReference type="RefSeq" id="WP_005718701.1">
    <property type="nucleotide sequence ID" value="NC_002663.1"/>
</dbReference>
<dbReference type="PDB" id="4IMC">
    <property type="method" value="X-ray"/>
    <property type="resolution" value="1.85 A"/>
    <property type="chains" value="A/B/C/D=1-293"/>
</dbReference>
<dbReference type="PDB" id="4IMD">
    <property type="method" value="X-ray"/>
    <property type="resolution" value="2.10 A"/>
    <property type="chains" value="A/B/C/D=1-293"/>
</dbReference>
<dbReference type="PDB" id="4IME">
    <property type="method" value="X-ray"/>
    <property type="resolution" value="1.75 A"/>
    <property type="chains" value="A/B/C/D/E/F/G/H=1-293"/>
</dbReference>
<dbReference type="PDB" id="4IMF">
    <property type="method" value="X-ray"/>
    <property type="resolution" value="1.90 A"/>
    <property type="chains" value="A/B=1-293"/>
</dbReference>
<dbReference type="PDB" id="4IMG">
    <property type="method" value="X-ray"/>
    <property type="resolution" value="1.85 A"/>
    <property type="chains" value="A/B=1-293"/>
</dbReference>
<dbReference type="PDBsum" id="4IMC"/>
<dbReference type="PDBsum" id="4IMD"/>
<dbReference type="PDBsum" id="4IME"/>
<dbReference type="PDBsum" id="4IMF"/>
<dbReference type="PDBsum" id="4IMG"/>
<dbReference type="SMR" id="Q9CKB0"/>
<dbReference type="STRING" id="272843.PM1715"/>
<dbReference type="EnsemblBacteria" id="AAK03799">
    <property type="protein sequence ID" value="AAK03799"/>
    <property type="gene ID" value="PM1715"/>
</dbReference>
<dbReference type="KEGG" id="pmu:PM1715"/>
<dbReference type="HOGENOM" id="CLU_049343_6_0_6"/>
<dbReference type="OrthoDB" id="199953at2"/>
<dbReference type="BRENDA" id="4.1.3.3">
    <property type="organism ID" value="4558"/>
</dbReference>
<dbReference type="UniPathway" id="UPA00629">
    <property type="reaction ID" value="UER00680"/>
</dbReference>
<dbReference type="EvolutionaryTrace" id="Q9CKB0"/>
<dbReference type="Proteomes" id="UP000000809">
    <property type="component" value="Chromosome"/>
</dbReference>
<dbReference type="GO" id="GO:0005829">
    <property type="term" value="C:cytosol"/>
    <property type="evidence" value="ECO:0007669"/>
    <property type="project" value="TreeGrafter"/>
</dbReference>
<dbReference type="GO" id="GO:0008747">
    <property type="term" value="F:N-acetylneuraminate lyase activity"/>
    <property type="evidence" value="ECO:0007669"/>
    <property type="project" value="UniProtKB-UniRule"/>
</dbReference>
<dbReference type="GO" id="GO:0005975">
    <property type="term" value="P:carbohydrate metabolic process"/>
    <property type="evidence" value="ECO:0007669"/>
    <property type="project" value="UniProtKB-UniRule"/>
</dbReference>
<dbReference type="GO" id="GO:0019262">
    <property type="term" value="P:N-acetylneuraminate catabolic process"/>
    <property type="evidence" value="ECO:0007669"/>
    <property type="project" value="UniProtKB-UniRule"/>
</dbReference>
<dbReference type="CDD" id="cd00954">
    <property type="entry name" value="NAL"/>
    <property type="match status" value="1"/>
</dbReference>
<dbReference type="FunFam" id="3.20.20.70:FF:000039">
    <property type="entry name" value="N-acetylneuraminate lyase"/>
    <property type="match status" value="1"/>
</dbReference>
<dbReference type="Gene3D" id="3.20.20.70">
    <property type="entry name" value="Aldolase class I"/>
    <property type="match status" value="1"/>
</dbReference>
<dbReference type="HAMAP" id="MF_01237">
    <property type="entry name" value="N_acetylneuram_lyase"/>
    <property type="match status" value="1"/>
</dbReference>
<dbReference type="InterPro" id="IPR013785">
    <property type="entry name" value="Aldolase_TIM"/>
</dbReference>
<dbReference type="InterPro" id="IPR002220">
    <property type="entry name" value="DapA-like"/>
</dbReference>
<dbReference type="InterPro" id="IPR005264">
    <property type="entry name" value="NanA"/>
</dbReference>
<dbReference type="InterPro" id="IPR020625">
    <property type="entry name" value="Schiff_base-form_aldolases_AS"/>
</dbReference>
<dbReference type="InterPro" id="IPR020624">
    <property type="entry name" value="Schiff_base-form_aldolases_CS"/>
</dbReference>
<dbReference type="NCBIfam" id="TIGR00683">
    <property type="entry name" value="nanA"/>
    <property type="match status" value="1"/>
</dbReference>
<dbReference type="NCBIfam" id="NF003164">
    <property type="entry name" value="PRK04147.1"/>
    <property type="match status" value="1"/>
</dbReference>
<dbReference type="PANTHER" id="PTHR42849">
    <property type="entry name" value="N-ACETYLNEURAMINATE LYASE"/>
    <property type="match status" value="1"/>
</dbReference>
<dbReference type="PANTHER" id="PTHR42849:SF1">
    <property type="entry name" value="N-ACETYLNEURAMINATE LYASE"/>
    <property type="match status" value="1"/>
</dbReference>
<dbReference type="Pfam" id="PF00701">
    <property type="entry name" value="DHDPS"/>
    <property type="match status" value="1"/>
</dbReference>
<dbReference type="PIRSF" id="PIRSF001365">
    <property type="entry name" value="DHDPS"/>
    <property type="match status" value="1"/>
</dbReference>
<dbReference type="PRINTS" id="PR00146">
    <property type="entry name" value="DHPICSNTHASE"/>
</dbReference>
<dbReference type="SMART" id="SM01130">
    <property type="entry name" value="DHDPS"/>
    <property type="match status" value="1"/>
</dbReference>
<dbReference type="SUPFAM" id="SSF51569">
    <property type="entry name" value="Aldolase"/>
    <property type="match status" value="1"/>
</dbReference>
<dbReference type="PROSITE" id="PS00665">
    <property type="entry name" value="DHDPS_1"/>
    <property type="match status" value="1"/>
</dbReference>
<dbReference type="PROSITE" id="PS00666">
    <property type="entry name" value="DHDPS_2"/>
    <property type="match status" value="1"/>
</dbReference>
<comment type="function">
    <text evidence="1">Catalyzes the reversible aldol cleavage of N-acetylneuraminic acid (sialic acid; Neu5Ac) to form pyruvate and N-acetylmannosamine (ManNAc) via a Schiff base intermediate.</text>
</comment>
<comment type="catalytic activity">
    <reaction evidence="1">
        <text>aceneuramate = aldehydo-N-acetyl-D-mannosamine + pyruvate</text>
        <dbReference type="Rhea" id="RHEA:23296"/>
        <dbReference type="ChEBI" id="CHEBI:15361"/>
        <dbReference type="ChEBI" id="CHEBI:17122"/>
        <dbReference type="ChEBI" id="CHEBI:173083"/>
        <dbReference type="EC" id="4.1.3.3"/>
    </reaction>
</comment>
<comment type="pathway">
    <text evidence="1">Amino-sugar metabolism; N-acetylneuraminate degradation; D-fructose 6-phosphate from N-acetylneuraminate: step 1/5.</text>
</comment>
<comment type="subunit">
    <text evidence="1 2">Homotetramer.</text>
</comment>
<comment type="subcellular location">
    <subcellularLocation>
        <location evidence="1">Cytoplasm</location>
    </subcellularLocation>
</comment>
<comment type="biotechnology">
    <text evidence="3">Although equilibrium favors sialic acid cleavage, this enzyme could be used for high-yield chemoenzymatic synthesis of structurally diverse sialic acids in the presence of excess pyruvate. Engineering these enzymes to synthesize structurally modified natural sialic acids and their non-natural derivatives holds promise in creating novel therapeutic agents.</text>
</comment>
<comment type="similarity">
    <text evidence="1">Belongs to the DapA family. NanA subfamily.</text>
</comment>
<feature type="chain" id="PRO_0000103216" description="N-acetylneuraminate lyase">
    <location>
        <begin position="1"/>
        <end position="293"/>
    </location>
</feature>
<feature type="active site" description="Proton donor" evidence="1">
    <location>
        <position position="136"/>
    </location>
</feature>
<feature type="active site" description="Schiff-base intermediate with substrate" evidence="1 4">
    <location>
        <position position="164"/>
    </location>
</feature>
<feature type="binding site" evidence="2 8">
    <location>
        <position position="47"/>
    </location>
    <ligand>
        <name>aceneuramate</name>
        <dbReference type="ChEBI" id="CHEBI:173083"/>
    </ligand>
</feature>
<feature type="binding site" evidence="2 8">
    <location>
        <position position="48"/>
    </location>
    <ligand>
        <name>aceneuramate</name>
        <dbReference type="ChEBI" id="CHEBI:173083"/>
    </ligand>
</feature>
<feature type="binding site" evidence="2 8">
    <location>
        <position position="136"/>
    </location>
    <ligand>
        <name>aceneuramate</name>
        <dbReference type="ChEBI" id="CHEBI:173083"/>
    </ligand>
</feature>
<feature type="binding site" evidence="2 8">
    <location>
        <position position="166"/>
    </location>
    <ligand>
        <name>aceneuramate</name>
        <dbReference type="ChEBI" id="CHEBI:173083"/>
    </ligand>
</feature>
<feature type="binding site" evidence="2 8">
    <location>
        <position position="188"/>
    </location>
    <ligand>
        <name>aceneuramate</name>
        <dbReference type="ChEBI" id="CHEBI:173083"/>
    </ligand>
</feature>
<feature type="binding site" evidence="2 8">
    <location>
        <position position="190"/>
    </location>
    <ligand>
        <name>aceneuramate</name>
        <dbReference type="ChEBI" id="CHEBI:173083"/>
    </ligand>
</feature>
<feature type="binding site" evidence="2 8">
    <location>
        <position position="191"/>
    </location>
    <ligand>
        <name>aceneuramate</name>
        <dbReference type="ChEBI" id="CHEBI:173083"/>
    </ligand>
</feature>
<feature type="binding site" evidence="2 8">
    <location>
        <position position="207"/>
    </location>
    <ligand>
        <name>aceneuramate</name>
        <dbReference type="ChEBI" id="CHEBI:173083"/>
    </ligand>
</feature>
<feature type="binding site" evidence="2 8">
    <location>
        <position position="251"/>
    </location>
    <ligand>
        <name>aceneuramate</name>
        <dbReference type="ChEBI" id="CHEBI:173083"/>
    </ligand>
</feature>
<feature type="mutagenesis site" description="Binds substrate but is unable to form a Schiff base." evidence="2">
    <original>K</original>
    <variation>A</variation>
    <location>
        <position position="164"/>
    </location>
</feature>
<feature type="strand" evidence="10">
    <location>
        <begin position="6"/>
        <end position="10"/>
    </location>
</feature>
<feature type="helix" evidence="10">
    <location>
        <begin position="23"/>
        <end position="35"/>
    </location>
</feature>
<feature type="strand" evidence="10">
    <location>
        <begin position="40"/>
        <end position="46"/>
    </location>
</feature>
<feature type="helix" evidence="10">
    <location>
        <begin position="47"/>
        <end position="49"/>
    </location>
</feature>
<feature type="helix" evidence="10">
    <location>
        <begin position="51"/>
        <end position="53"/>
    </location>
</feature>
<feature type="helix" evidence="10">
    <location>
        <begin position="56"/>
        <end position="70"/>
    </location>
</feature>
<feature type="strand" evidence="10">
    <location>
        <begin position="73"/>
        <end position="79"/>
    </location>
</feature>
<feature type="helix" evidence="10">
    <location>
        <begin position="85"/>
        <end position="98"/>
    </location>
</feature>
<feature type="strand" evidence="10">
    <location>
        <begin position="101"/>
        <end position="106"/>
    </location>
</feature>
<feature type="helix" evidence="10">
    <location>
        <begin position="115"/>
        <end position="129"/>
    </location>
</feature>
<feature type="strand" evidence="10">
    <location>
        <begin position="133"/>
        <end position="137"/>
    </location>
</feature>
<feature type="helix" evidence="10">
    <location>
        <begin position="139"/>
        <end position="142"/>
    </location>
</feature>
<feature type="helix" evidence="10">
    <location>
        <begin position="148"/>
        <end position="155"/>
    </location>
</feature>
<feature type="strand" evidence="10">
    <location>
        <begin position="160"/>
        <end position="165"/>
    </location>
</feature>
<feature type="helix" evidence="10">
    <location>
        <begin position="170"/>
        <end position="179"/>
    </location>
</feature>
<feature type="strand" evidence="10">
    <location>
        <begin position="183"/>
        <end position="187"/>
    </location>
</feature>
<feature type="helix" evidence="10">
    <location>
        <begin position="190"/>
        <end position="192"/>
    </location>
</feature>
<feature type="helix" evidence="10">
    <location>
        <begin position="193"/>
        <end position="198"/>
    </location>
</feature>
<feature type="strand" evidence="10">
    <location>
        <begin position="202"/>
        <end position="207"/>
    </location>
</feature>
<feature type="helix" evidence="10">
    <location>
        <begin position="209"/>
        <end position="224"/>
    </location>
</feature>
<feature type="helix" evidence="10">
    <location>
        <begin position="228"/>
        <end position="248"/>
    </location>
</feature>
<feature type="helix" evidence="10">
    <location>
        <begin position="250"/>
        <end position="259"/>
    </location>
</feature>
<feature type="turn" evidence="10">
    <location>
        <begin position="260"/>
        <end position="262"/>
    </location>
</feature>
<feature type="helix" evidence="10">
    <location>
        <begin position="278"/>
        <end position="291"/>
    </location>
</feature>
<organism>
    <name type="scientific">Pasteurella multocida (strain Pm70)</name>
    <dbReference type="NCBI Taxonomy" id="272843"/>
    <lineage>
        <taxon>Bacteria</taxon>
        <taxon>Pseudomonadati</taxon>
        <taxon>Pseudomonadota</taxon>
        <taxon>Gammaproteobacteria</taxon>
        <taxon>Pasteurellales</taxon>
        <taxon>Pasteurellaceae</taxon>
        <taxon>Pasteurella</taxon>
    </lineage>
</organism>
<gene>
    <name evidence="1" type="primary">nanA</name>
    <name type="ordered locus">PM1715</name>
</gene>
<reference key="1">
    <citation type="journal article" date="2001" name="Proc. Natl. Acad. Sci. U.S.A.">
        <title>Complete genomic sequence of Pasteurella multocida Pm70.</title>
        <authorList>
            <person name="May B.J."/>
            <person name="Zhang Q."/>
            <person name="Li L.L."/>
            <person name="Paustian M.L."/>
            <person name="Whittam T.S."/>
            <person name="Kapur V."/>
        </authorList>
    </citation>
    <scope>NUCLEOTIDE SEQUENCE [LARGE SCALE GENOMIC DNA]</scope>
    <source>
        <strain>Pm70</strain>
    </source>
</reference>
<reference evidence="5 6 7 8 9" key="2">
    <citation type="journal article" date="2013" name="Biochemistry">
        <title>Structural basis for substrate specificity and mechanism of N-acetyl-D-neuraminic acid lyase from Pasteurella multocida.</title>
        <authorList>
            <person name="Huynh N."/>
            <person name="Aye A."/>
            <person name="Li Y."/>
            <person name="Yu H."/>
            <person name="Cao H."/>
            <person name="Tiwari V.K."/>
            <person name="Shin D.W."/>
            <person name="Chen X."/>
            <person name="Fisher A.J."/>
        </authorList>
    </citation>
    <scope>X-RAY CRYSTALLOGRAPHY (1.75 ANGSTROMS) OF WILD-TYPE AND MUTANT ALA-164 IN LIGAND-FREE FORM AND IN COMPLEXES WITH N-ACETYLNEURAMINIC ACID AND N-GLYCOLYLNEURAMINIC ACID</scope>
    <scope>SUBUNIT</scope>
    <scope>BIOTECHNOLOGY</scope>
    <scope>MUTAGENESIS OF LYS-164</scope>
    <scope>ACTIVE SITE</scope>
</reference>
<keyword id="KW-0002">3D-structure</keyword>
<keyword id="KW-0119">Carbohydrate metabolism</keyword>
<keyword id="KW-0963">Cytoplasm</keyword>
<keyword id="KW-0456">Lyase</keyword>
<keyword id="KW-1185">Reference proteome</keyword>
<keyword id="KW-0704">Schiff base</keyword>
<evidence type="ECO:0000255" key="1">
    <source>
        <dbReference type="HAMAP-Rule" id="MF_01237"/>
    </source>
</evidence>
<evidence type="ECO:0000269" key="2">
    <source>
    </source>
</evidence>
<evidence type="ECO:0000303" key="3">
    <source>
    </source>
</evidence>
<evidence type="ECO:0000305" key="4">
    <source>
    </source>
</evidence>
<evidence type="ECO:0007744" key="5">
    <source>
        <dbReference type="PDB" id="4IMC"/>
    </source>
</evidence>
<evidence type="ECO:0007744" key="6">
    <source>
        <dbReference type="PDB" id="4IMD"/>
    </source>
</evidence>
<evidence type="ECO:0007744" key="7">
    <source>
        <dbReference type="PDB" id="4IME"/>
    </source>
</evidence>
<evidence type="ECO:0007744" key="8">
    <source>
        <dbReference type="PDB" id="4IMF"/>
    </source>
</evidence>
<evidence type="ECO:0007744" key="9">
    <source>
        <dbReference type="PDB" id="4IMG"/>
    </source>
</evidence>
<evidence type="ECO:0007829" key="10">
    <source>
        <dbReference type="PDB" id="4IME"/>
    </source>
</evidence>
<protein>
    <recommendedName>
        <fullName evidence="1 3">N-acetylneuraminate lyase</fullName>
        <shortName evidence="1 3">NAL</shortName>
        <shortName evidence="1">Neu5Ac lyase</shortName>
        <ecNumber evidence="1">4.1.3.3</ecNumber>
    </recommendedName>
    <alternativeName>
        <fullName evidence="3">N-acetyl-D-neuraminic acid lyase</fullName>
    </alternativeName>
    <alternativeName>
        <fullName evidence="1">N-acetylneuraminate pyruvate-lyase</fullName>
    </alternativeName>
    <alternativeName>
        <fullName evidence="1">N-acetylneuraminic acid aldolase</fullName>
    </alternativeName>
    <alternativeName>
        <fullName evidence="1">Sialate lyase</fullName>
    </alternativeName>
    <alternativeName>
        <fullName evidence="1 3">Sialic acid aldolase</fullName>
    </alternativeName>
    <alternativeName>
        <fullName evidence="1">Sialic acid lyase</fullName>
    </alternativeName>
</protein>
<accession>Q9CKB0</accession>
<sequence>MKNLKGIFSALLVSFNADGSINEKGLRQIVRYNIDKMKVDGLYVGGSTGENFMLSTEEKKEIFRIAKDEAKDEIALIAQVGSVNLQEAIELGKYATELGYDSLSAVTPFYYKFSFPEIKHYYDSIIEATGNYMIVYSIPFLTGVNIGVEQFGELYKNPKVLGVKFTAGDFYLLERLKKAYPNHLIWAGFDEMMLPAASLGVDGAIGSTFNVNGVRARQIFELTQAGKLKEALEIQHVTNDLIEGILANGLYLTIKELLKLDGVEAGYCREPMTKELSPEKVAFAKELKAKYLS</sequence>
<proteinExistence type="evidence at protein level"/>
<name>NANA_PASMU</name>